<keyword id="KW-1185">Reference proteome</keyword>
<keyword id="KW-0687">Ribonucleoprotein</keyword>
<keyword id="KW-0689">Ribosomal protein</keyword>
<keyword id="KW-0694">RNA-binding</keyword>
<keyword id="KW-0699">rRNA-binding</keyword>
<accession>B9E724</accession>
<reference key="1">
    <citation type="journal article" date="2009" name="J. Bacteriol.">
        <title>Complete genome sequence of Macrococcus caseolyticus strain JCSCS5402, reflecting the ancestral genome of the human-pathogenic staphylococci.</title>
        <authorList>
            <person name="Baba T."/>
            <person name="Kuwahara-Arai K."/>
            <person name="Uchiyama I."/>
            <person name="Takeuchi F."/>
            <person name="Ito T."/>
            <person name="Hiramatsu K."/>
        </authorList>
    </citation>
    <scope>NUCLEOTIDE SEQUENCE [LARGE SCALE GENOMIC DNA]</scope>
    <source>
        <strain>JCSC5402</strain>
    </source>
</reference>
<proteinExistence type="inferred from homology"/>
<feature type="chain" id="PRO_1000166728" description="Large ribosomal subunit protein bL21">
    <location>
        <begin position="1"/>
        <end position="102"/>
    </location>
</feature>
<evidence type="ECO:0000255" key="1">
    <source>
        <dbReference type="HAMAP-Rule" id="MF_01363"/>
    </source>
</evidence>
<evidence type="ECO:0000305" key="2"/>
<gene>
    <name evidence="1" type="primary">rplU</name>
    <name type="ordered locus">MCCL_1285</name>
</gene>
<sequence length="102" mass="11377">MFAIIETGGKQLKVEQGQEIWVEKLNAEEGSTFTFDQVLMVGGETVKVGSPVVEGATVTAKVEKHGRGKKITVFKYKPKKNYKRKQGHRQPYTKLVIEAINA</sequence>
<dbReference type="EMBL" id="AP009484">
    <property type="protein sequence ID" value="BAH17992.1"/>
    <property type="molecule type" value="Genomic_DNA"/>
</dbReference>
<dbReference type="RefSeq" id="WP_012657190.1">
    <property type="nucleotide sequence ID" value="NC_011999.1"/>
</dbReference>
<dbReference type="SMR" id="B9E724"/>
<dbReference type="STRING" id="458233.MCCL_1285"/>
<dbReference type="GeneID" id="35295733"/>
<dbReference type="GeneID" id="61128815"/>
<dbReference type="KEGG" id="mcl:MCCL_1285"/>
<dbReference type="eggNOG" id="COG0261">
    <property type="taxonomic scope" value="Bacteria"/>
</dbReference>
<dbReference type="HOGENOM" id="CLU_061463_3_2_9"/>
<dbReference type="OrthoDB" id="9813334at2"/>
<dbReference type="Proteomes" id="UP000001383">
    <property type="component" value="Chromosome"/>
</dbReference>
<dbReference type="GO" id="GO:0005737">
    <property type="term" value="C:cytoplasm"/>
    <property type="evidence" value="ECO:0007669"/>
    <property type="project" value="UniProtKB-ARBA"/>
</dbReference>
<dbReference type="GO" id="GO:1990904">
    <property type="term" value="C:ribonucleoprotein complex"/>
    <property type="evidence" value="ECO:0007669"/>
    <property type="project" value="UniProtKB-KW"/>
</dbReference>
<dbReference type="GO" id="GO:0005840">
    <property type="term" value="C:ribosome"/>
    <property type="evidence" value="ECO:0007669"/>
    <property type="project" value="UniProtKB-KW"/>
</dbReference>
<dbReference type="GO" id="GO:0019843">
    <property type="term" value="F:rRNA binding"/>
    <property type="evidence" value="ECO:0007669"/>
    <property type="project" value="UniProtKB-UniRule"/>
</dbReference>
<dbReference type="GO" id="GO:0003735">
    <property type="term" value="F:structural constituent of ribosome"/>
    <property type="evidence" value="ECO:0007669"/>
    <property type="project" value="InterPro"/>
</dbReference>
<dbReference type="GO" id="GO:0006412">
    <property type="term" value="P:translation"/>
    <property type="evidence" value="ECO:0007669"/>
    <property type="project" value="UniProtKB-UniRule"/>
</dbReference>
<dbReference type="HAMAP" id="MF_01363">
    <property type="entry name" value="Ribosomal_bL21"/>
    <property type="match status" value="1"/>
</dbReference>
<dbReference type="InterPro" id="IPR028909">
    <property type="entry name" value="bL21-like"/>
</dbReference>
<dbReference type="InterPro" id="IPR036164">
    <property type="entry name" value="bL21-like_sf"/>
</dbReference>
<dbReference type="InterPro" id="IPR001787">
    <property type="entry name" value="Ribosomal_bL21"/>
</dbReference>
<dbReference type="InterPro" id="IPR018258">
    <property type="entry name" value="Ribosomal_bL21_CS"/>
</dbReference>
<dbReference type="NCBIfam" id="TIGR00061">
    <property type="entry name" value="L21"/>
    <property type="match status" value="1"/>
</dbReference>
<dbReference type="PANTHER" id="PTHR21349">
    <property type="entry name" value="50S RIBOSOMAL PROTEIN L21"/>
    <property type="match status" value="1"/>
</dbReference>
<dbReference type="PANTHER" id="PTHR21349:SF0">
    <property type="entry name" value="LARGE RIBOSOMAL SUBUNIT PROTEIN BL21M"/>
    <property type="match status" value="1"/>
</dbReference>
<dbReference type="Pfam" id="PF00829">
    <property type="entry name" value="Ribosomal_L21p"/>
    <property type="match status" value="1"/>
</dbReference>
<dbReference type="SUPFAM" id="SSF141091">
    <property type="entry name" value="L21p-like"/>
    <property type="match status" value="1"/>
</dbReference>
<dbReference type="PROSITE" id="PS01169">
    <property type="entry name" value="RIBOSOMAL_L21"/>
    <property type="match status" value="1"/>
</dbReference>
<comment type="function">
    <text evidence="1">This protein binds to 23S rRNA in the presence of protein L20.</text>
</comment>
<comment type="subunit">
    <text evidence="1">Part of the 50S ribosomal subunit. Contacts protein L20.</text>
</comment>
<comment type="similarity">
    <text evidence="1">Belongs to the bacterial ribosomal protein bL21 family.</text>
</comment>
<organism>
    <name type="scientific">Macrococcus caseolyticus (strain JCSC5402)</name>
    <name type="common">Macrococcoides caseolyticum</name>
    <dbReference type="NCBI Taxonomy" id="458233"/>
    <lineage>
        <taxon>Bacteria</taxon>
        <taxon>Bacillati</taxon>
        <taxon>Bacillota</taxon>
        <taxon>Bacilli</taxon>
        <taxon>Bacillales</taxon>
        <taxon>Staphylococcaceae</taxon>
        <taxon>Macrococcoides</taxon>
    </lineage>
</organism>
<name>RL21_MACCJ</name>
<protein>
    <recommendedName>
        <fullName evidence="1">Large ribosomal subunit protein bL21</fullName>
    </recommendedName>
    <alternativeName>
        <fullName evidence="2">50S ribosomal protein L21</fullName>
    </alternativeName>
</protein>